<accession>Q6GBA0</accession>
<dbReference type="EMBL" id="BX571857">
    <property type="protein sequence ID" value="CAG42471.1"/>
    <property type="molecule type" value="Genomic_DNA"/>
</dbReference>
<dbReference type="RefSeq" id="WP_000692521.1">
    <property type="nucleotide sequence ID" value="NC_002953.3"/>
</dbReference>
<dbReference type="SMR" id="Q6GBA0"/>
<dbReference type="KEGG" id="sas:SAS0695"/>
<dbReference type="HOGENOM" id="CLU_114845_3_0_9"/>
<dbReference type="GO" id="GO:0010181">
    <property type="term" value="F:FMN binding"/>
    <property type="evidence" value="ECO:0007669"/>
    <property type="project" value="InterPro"/>
</dbReference>
<dbReference type="GO" id="GO:0036211">
    <property type="term" value="P:protein modification process"/>
    <property type="evidence" value="ECO:0007669"/>
    <property type="project" value="InterPro"/>
</dbReference>
<dbReference type="Gene3D" id="3.40.50.360">
    <property type="match status" value="1"/>
</dbReference>
<dbReference type="HAMAP" id="MF_00128">
    <property type="entry name" value="NrdI"/>
    <property type="match status" value="1"/>
</dbReference>
<dbReference type="InterPro" id="IPR029039">
    <property type="entry name" value="Flavoprotein-like_sf"/>
</dbReference>
<dbReference type="InterPro" id="IPR020852">
    <property type="entry name" value="RNR_Ib_NrdI_bac"/>
</dbReference>
<dbReference type="InterPro" id="IPR004465">
    <property type="entry name" value="RNR_NrdI"/>
</dbReference>
<dbReference type="NCBIfam" id="TIGR00333">
    <property type="entry name" value="nrdI"/>
    <property type="match status" value="1"/>
</dbReference>
<dbReference type="PANTHER" id="PTHR37297">
    <property type="entry name" value="PROTEIN NRDI"/>
    <property type="match status" value="1"/>
</dbReference>
<dbReference type="PANTHER" id="PTHR37297:SF1">
    <property type="entry name" value="PROTEIN NRDI"/>
    <property type="match status" value="1"/>
</dbReference>
<dbReference type="Pfam" id="PF07972">
    <property type="entry name" value="Flavodoxin_NdrI"/>
    <property type="match status" value="1"/>
</dbReference>
<dbReference type="PIRSF" id="PIRSF005087">
    <property type="entry name" value="NrdI"/>
    <property type="match status" value="1"/>
</dbReference>
<dbReference type="SUPFAM" id="SSF52218">
    <property type="entry name" value="Flavoproteins"/>
    <property type="match status" value="1"/>
</dbReference>
<evidence type="ECO:0000255" key="1">
    <source>
        <dbReference type="HAMAP-Rule" id="MF_00128"/>
    </source>
</evidence>
<sequence length="132" mass="15166">MKIIYFSFTGNVRRFIKRTELENTLEITAENCMEPVHEPFIIVTGTIGFGEVPEPVQSFLEVNHQYIRGVAASGNRNWGLNFAKAGRTISEEYNVPLLMKFELHGKNKDVIEFKNKVGNFNENHGREKVQSY</sequence>
<reference key="1">
    <citation type="journal article" date="2004" name="Proc. Natl. Acad. Sci. U.S.A.">
        <title>Complete genomes of two clinical Staphylococcus aureus strains: evidence for the rapid evolution of virulence and drug resistance.</title>
        <authorList>
            <person name="Holden M.T.G."/>
            <person name="Feil E.J."/>
            <person name="Lindsay J.A."/>
            <person name="Peacock S.J."/>
            <person name="Day N.P.J."/>
            <person name="Enright M.C."/>
            <person name="Foster T.J."/>
            <person name="Moore C.E."/>
            <person name="Hurst L."/>
            <person name="Atkin R."/>
            <person name="Barron A."/>
            <person name="Bason N."/>
            <person name="Bentley S.D."/>
            <person name="Chillingworth C."/>
            <person name="Chillingworth T."/>
            <person name="Churcher C."/>
            <person name="Clark L."/>
            <person name="Corton C."/>
            <person name="Cronin A."/>
            <person name="Doggett J."/>
            <person name="Dowd L."/>
            <person name="Feltwell T."/>
            <person name="Hance Z."/>
            <person name="Harris B."/>
            <person name="Hauser H."/>
            <person name="Holroyd S."/>
            <person name="Jagels K."/>
            <person name="James K.D."/>
            <person name="Lennard N."/>
            <person name="Line A."/>
            <person name="Mayes R."/>
            <person name="Moule S."/>
            <person name="Mungall K."/>
            <person name="Ormond D."/>
            <person name="Quail M.A."/>
            <person name="Rabbinowitsch E."/>
            <person name="Rutherford K.M."/>
            <person name="Sanders M."/>
            <person name="Sharp S."/>
            <person name="Simmonds M."/>
            <person name="Stevens K."/>
            <person name="Whitehead S."/>
            <person name="Barrell B.G."/>
            <person name="Spratt B.G."/>
            <person name="Parkhill J."/>
        </authorList>
    </citation>
    <scope>NUCLEOTIDE SEQUENCE [LARGE SCALE GENOMIC DNA]</scope>
    <source>
        <strain>MSSA476</strain>
    </source>
</reference>
<comment type="function">
    <text evidence="1">Probably involved in ribonucleotide reductase function.</text>
</comment>
<comment type="similarity">
    <text evidence="1">Belongs to the NrdI family.</text>
</comment>
<organism>
    <name type="scientific">Staphylococcus aureus (strain MSSA476)</name>
    <dbReference type="NCBI Taxonomy" id="282459"/>
    <lineage>
        <taxon>Bacteria</taxon>
        <taxon>Bacillati</taxon>
        <taxon>Bacillota</taxon>
        <taxon>Bacilli</taxon>
        <taxon>Bacillales</taxon>
        <taxon>Staphylococcaceae</taxon>
        <taxon>Staphylococcus</taxon>
    </lineage>
</organism>
<gene>
    <name evidence="1" type="primary">nrdI</name>
    <name type="ordered locus">SAS0695</name>
</gene>
<name>NRDI_STAAS</name>
<proteinExistence type="inferred from homology"/>
<protein>
    <recommendedName>
        <fullName evidence="1">Protein NrdI</fullName>
    </recommendedName>
</protein>
<feature type="chain" id="PRO_0000164338" description="Protein NrdI">
    <location>
        <begin position="1"/>
        <end position="132"/>
    </location>
</feature>